<accession>Q2GG34</accession>
<proteinExistence type="inferred from homology"/>
<evidence type="ECO:0000255" key="1">
    <source>
        <dbReference type="HAMAP-Rule" id="MF_00376"/>
    </source>
</evidence>
<organism>
    <name type="scientific">Ehrlichia chaffeensis (strain ATCC CRL-10679 / Arkansas)</name>
    <dbReference type="NCBI Taxonomy" id="205920"/>
    <lineage>
        <taxon>Bacteria</taxon>
        <taxon>Pseudomonadati</taxon>
        <taxon>Pseudomonadota</taxon>
        <taxon>Alphaproteobacteria</taxon>
        <taxon>Rickettsiales</taxon>
        <taxon>Anaplasmataceae</taxon>
        <taxon>Ehrlichia</taxon>
    </lineage>
</organism>
<protein>
    <recommendedName>
        <fullName evidence="1">Dephospho-CoA kinase</fullName>
        <ecNumber evidence="1">2.7.1.24</ecNumber>
    </recommendedName>
    <alternativeName>
        <fullName evidence="1">Dephosphocoenzyme A kinase</fullName>
    </alternativeName>
</protein>
<name>COAE_EHRCR</name>
<keyword id="KW-0067">ATP-binding</keyword>
<keyword id="KW-0173">Coenzyme A biosynthesis</keyword>
<keyword id="KW-0963">Cytoplasm</keyword>
<keyword id="KW-0418">Kinase</keyword>
<keyword id="KW-0547">Nucleotide-binding</keyword>
<keyword id="KW-1185">Reference proteome</keyword>
<keyword id="KW-0808">Transferase</keyword>
<feature type="chain" id="PRO_0000243284" description="Dephospho-CoA kinase">
    <location>
        <begin position="1"/>
        <end position="202"/>
    </location>
</feature>
<feature type="domain" description="DPCK" evidence="1">
    <location>
        <begin position="3"/>
        <end position="202"/>
    </location>
</feature>
<feature type="binding site" evidence="1">
    <location>
        <begin position="11"/>
        <end position="16"/>
    </location>
    <ligand>
        <name>ATP</name>
        <dbReference type="ChEBI" id="CHEBI:30616"/>
    </ligand>
</feature>
<dbReference type="EC" id="2.7.1.24" evidence="1"/>
<dbReference type="EMBL" id="CP000236">
    <property type="protein sequence ID" value="ABD44854.1"/>
    <property type="molecule type" value="Genomic_DNA"/>
</dbReference>
<dbReference type="RefSeq" id="WP_006009807.1">
    <property type="nucleotide sequence ID" value="NC_007799.1"/>
</dbReference>
<dbReference type="SMR" id="Q2GG34"/>
<dbReference type="STRING" id="205920.ECH_0801"/>
<dbReference type="KEGG" id="ech:ECH_0801"/>
<dbReference type="eggNOG" id="COG0237">
    <property type="taxonomic scope" value="Bacteria"/>
</dbReference>
<dbReference type="HOGENOM" id="CLU_057180_3_0_5"/>
<dbReference type="OrthoDB" id="9812943at2"/>
<dbReference type="UniPathway" id="UPA00241">
    <property type="reaction ID" value="UER00356"/>
</dbReference>
<dbReference type="Proteomes" id="UP000008320">
    <property type="component" value="Chromosome"/>
</dbReference>
<dbReference type="GO" id="GO:0005737">
    <property type="term" value="C:cytoplasm"/>
    <property type="evidence" value="ECO:0007669"/>
    <property type="project" value="UniProtKB-SubCell"/>
</dbReference>
<dbReference type="GO" id="GO:0005524">
    <property type="term" value="F:ATP binding"/>
    <property type="evidence" value="ECO:0007669"/>
    <property type="project" value="UniProtKB-UniRule"/>
</dbReference>
<dbReference type="GO" id="GO:0004140">
    <property type="term" value="F:dephospho-CoA kinase activity"/>
    <property type="evidence" value="ECO:0007669"/>
    <property type="project" value="UniProtKB-UniRule"/>
</dbReference>
<dbReference type="GO" id="GO:0015937">
    <property type="term" value="P:coenzyme A biosynthetic process"/>
    <property type="evidence" value="ECO:0007669"/>
    <property type="project" value="UniProtKB-UniRule"/>
</dbReference>
<dbReference type="CDD" id="cd02022">
    <property type="entry name" value="DPCK"/>
    <property type="match status" value="1"/>
</dbReference>
<dbReference type="Gene3D" id="3.40.50.300">
    <property type="entry name" value="P-loop containing nucleotide triphosphate hydrolases"/>
    <property type="match status" value="1"/>
</dbReference>
<dbReference type="HAMAP" id="MF_00376">
    <property type="entry name" value="Dephospho_CoA_kinase"/>
    <property type="match status" value="1"/>
</dbReference>
<dbReference type="InterPro" id="IPR001977">
    <property type="entry name" value="Depp_CoAkinase"/>
</dbReference>
<dbReference type="InterPro" id="IPR027417">
    <property type="entry name" value="P-loop_NTPase"/>
</dbReference>
<dbReference type="NCBIfam" id="TIGR00152">
    <property type="entry name" value="dephospho-CoA kinase"/>
    <property type="match status" value="1"/>
</dbReference>
<dbReference type="PANTHER" id="PTHR10695:SF46">
    <property type="entry name" value="BIFUNCTIONAL COENZYME A SYNTHASE-RELATED"/>
    <property type="match status" value="1"/>
</dbReference>
<dbReference type="PANTHER" id="PTHR10695">
    <property type="entry name" value="DEPHOSPHO-COA KINASE-RELATED"/>
    <property type="match status" value="1"/>
</dbReference>
<dbReference type="Pfam" id="PF01121">
    <property type="entry name" value="CoaE"/>
    <property type="match status" value="1"/>
</dbReference>
<dbReference type="SUPFAM" id="SSF52540">
    <property type="entry name" value="P-loop containing nucleoside triphosphate hydrolases"/>
    <property type="match status" value="1"/>
</dbReference>
<dbReference type="PROSITE" id="PS51219">
    <property type="entry name" value="DPCK"/>
    <property type="match status" value="1"/>
</dbReference>
<sequence length="202" mass="23334">MVIFGLTGGIGSGKSLVASYFKTLFKAVVFDADQVVCQLYNCDNSVIKLVKTYFPDSVDHGVVNKNSLRQHFFAYSNLWVEFQSTLHSIILEKQKNFIMFHNRQSTKYVVLDVPLLIESNFYSCCNFIIHVTTNRLLQMQRVLYRGLSIREFESIIAIQLSENDRKKFANFTIRTGLSKGDVLFQIQKIMFDISHRSKYLSC</sequence>
<gene>
    <name evidence="1" type="primary">coaE</name>
    <name type="ordered locus">ECH_0801</name>
</gene>
<reference key="1">
    <citation type="journal article" date="2006" name="PLoS Genet.">
        <title>Comparative genomics of emerging human ehrlichiosis agents.</title>
        <authorList>
            <person name="Dunning Hotopp J.C."/>
            <person name="Lin M."/>
            <person name="Madupu R."/>
            <person name="Crabtree J."/>
            <person name="Angiuoli S.V."/>
            <person name="Eisen J.A."/>
            <person name="Seshadri R."/>
            <person name="Ren Q."/>
            <person name="Wu M."/>
            <person name="Utterback T.R."/>
            <person name="Smith S."/>
            <person name="Lewis M."/>
            <person name="Khouri H."/>
            <person name="Zhang C."/>
            <person name="Niu H."/>
            <person name="Lin Q."/>
            <person name="Ohashi N."/>
            <person name="Zhi N."/>
            <person name="Nelson W.C."/>
            <person name="Brinkac L.M."/>
            <person name="Dodson R.J."/>
            <person name="Rosovitz M.J."/>
            <person name="Sundaram J.P."/>
            <person name="Daugherty S.C."/>
            <person name="Davidsen T."/>
            <person name="Durkin A.S."/>
            <person name="Gwinn M.L."/>
            <person name="Haft D.H."/>
            <person name="Selengut J.D."/>
            <person name="Sullivan S.A."/>
            <person name="Zafar N."/>
            <person name="Zhou L."/>
            <person name="Benahmed F."/>
            <person name="Forberger H."/>
            <person name="Halpin R."/>
            <person name="Mulligan S."/>
            <person name="Robinson J."/>
            <person name="White O."/>
            <person name="Rikihisa Y."/>
            <person name="Tettelin H."/>
        </authorList>
    </citation>
    <scope>NUCLEOTIDE SEQUENCE [LARGE SCALE GENOMIC DNA]</scope>
    <source>
        <strain>ATCC CRL-10679 / Arkansas</strain>
    </source>
</reference>
<comment type="function">
    <text evidence="1">Catalyzes the phosphorylation of the 3'-hydroxyl group of dephosphocoenzyme A to form coenzyme A.</text>
</comment>
<comment type="catalytic activity">
    <reaction evidence="1">
        <text>3'-dephospho-CoA + ATP = ADP + CoA + H(+)</text>
        <dbReference type="Rhea" id="RHEA:18245"/>
        <dbReference type="ChEBI" id="CHEBI:15378"/>
        <dbReference type="ChEBI" id="CHEBI:30616"/>
        <dbReference type="ChEBI" id="CHEBI:57287"/>
        <dbReference type="ChEBI" id="CHEBI:57328"/>
        <dbReference type="ChEBI" id="CHEBI:456216"/>
        <dbReference type="EC" id="2.7.1.24"/>
    </reaction>
</comment>
<comment type="pathway">
    <text evidence="1">Cofactor biosynthesis; coenzyme A biosynthesis; CoA from (R)-pantothenate: step 5/5.</text>
</comment>
<comment type="subcellular location">
    <subcellularLocation>
        <location evidence="1">Cytoplasm</location>
    </subcellularLocation>
</comment>
<comment type="similarity">
    <text evidence="1">Belongs to the CoaE family.</text>
</comment>